<keyword id="KW-0997">Cell inner membrane</keyword>
<keyword id="KW-1003">Cell membrane</keyword>
<keyword id="KW-0406">Ion transport</keyword>
<keyword id="KW-0472">Membrane</keyword>
<keyword id="KW-0534">Nitrate assimilation</keyword>
<keyword id="KW-1185">Reference proteome</keyword>
<keyword id="KW-0812">Transmembrane</keyword>
<keyword id="KW-1133">Transmembrane helix</keyword>
<keyword id="KW-0813">Transport</keyword>
<feature type="chain" id="PRO_0000060126" description="Nitrate import permease protein NrtB">
    <location>
        <begin position="1"/>
        <end position="279"/>
    </location>
</feature>
<feature type="transmembrane region" description="Helical" evidence="1">
    <location>
        <begin position="25"/>
        <end position="45"/>
    </location>
</feature>
<feature type="transmembrane region" description="Helical" evidence="1">
    <location>
        <begin position="91"/>
        <end position="111"/>
    </location>
</feature>
<feature type="transmembrane region" description="Helical" evidence="1">
    <location>
        <begin position="149"/>
        <end position="169"/>
    </location>
</feature>
<feature type="transmembrane region" description="Helical" evidence="1">
    <location>
        <begin position="200"/>
        <end position="220"/>
    </location>
</feature>
<feature type="transmembrane region" description="Helical" evidence="1">
    <location>
        <begin position="249"/>
        <end position="269"/>
    </location>
</feature>
<feature type="domain" description="ABC transmembrane type-1" evidence="2">
    <location>
        <begin position="84"/>
        <end position="267"/>
    </location>
</feature>
<sequence>MTVTLRPPSSVRRSAWVKNPKLKPFLPYVVCLPIFLAIWQVISAILGQDRLPGPINVVANTWMPYIVEPFFDNGGTSKGLGLQILISLQRVAIGYLLAACTGILVGGVLGMSKFLGKGLDPVIQVLRTVPPLAWFPISLMVFQDANTSAIFVIFITAIWPIIINTAVGINQIPDDYNNVARVLKLSKKDYILNILIPSTVPYVFAGLRIAVGLAWLAIVAAEMLKADGGIGYFIWDAYNAGGDGSSSQIILAIFYVGLVGLSLDRLVAWVGRLVSPVSR</sequence>
<dbReference type="EMBL" id="X61625">
    <property type="protein sequence ID" value="CAA43810.1"/>
    <property type="molecule type" value="Genomic_DNA"/>
</dbReference>
<dbReference type="EMBL" id="CP000100">
    <property type="protein sequence ID" value="ABB57268.1"/>
    <property type="molecule type" value="Genomic_DNA"/>
</dbReference>
<dbReference type="PIR" id="S30892">
    <property type="entry name" value="S30892"/>
</dbReference>
<dbReference type="SMR" id="P38044"/>
<dbReference type="STRING" id="1140.Synpcc7942_1238"/>
<dbReference type="TCDB" id="3.A.1.16.1">
    <property type="family name" value="the atp-binding cassette (abc) superfamily"/>
</dbReference>
<dbReference type="PaxDb" id="1140-Synpcc7942_1238"/>
<dbReference type="KEGG" id="syf:Synpcc7942_1238"/>
<dbReference type="eggNOG" id="COG0600">
    <property type="taxonomic scope" value="Bacteria"/>
</dbReference>
<dbReference type="HOGENOM" id="CLU_046113_1_1_3"/>
<dbReference type="OrthoDB" id="9804353at2"/>
<dbReference type="BioCyc" id="SYNEL:SYNPCC7942_1238-MONOMER"/>
<dbReference type="Proteomes" id="UP000889800">
    <property type="component" value="Chromosome"/>
</dbReference>
<dbReference type="GO" id="GO:0005886">
    <property type="term" value="C:plasma membrane"/>
    <property type="evidence" value="ECO:0007669"/>
    <property type="project" value="UniProtKB-SubCell"/>
</dbReference>
<dbReference type="GO" id="GO:0015112">
    <property type="term" value="F:nitrate transmembrane transporter activity"/>
    <property type="evidence" value="ECO:0007669"/>
    <property type="project" value="InterPro"/>
</dbReference>
<dbReference type="GO" id="GO:0006811">
    <property type="term" value="P:monoatomic ion transport"/>
    <property type="evidence" value="ECO:0007669"/>
    <property type="project" value="UniProtKB-KW"/>
</dbReference>
<dbReference type="GO" id="GO:0042128">
    <property type="term" value="P:nitrate assimilation"/>
    <property type="evidence" value="ECO:0007669"/>
    <property type="project" value="UniProtKB-KW"/>
</dbReference>
<dbReference type="FunFam" id="1.10.3720.10:FF:000003">
    <property type="entry name" value="Aliphatic sulfonate ABC transporter permease"/>
    <property type="match status" value="1"/>
</dbReference>
<dbReference type="Gene3D" id="1.10.3720.10">
    <property type="entry name" value="MetI-like"/>
    <property type="match status" value="1"/>
</dbReference>
<dbReference type="InterPro" id="IPR000515">
    <property type="entry name" value="MetI-like"/>
</dbReference>
<dbReference type="InterPro" id="IPR035906">
    <property type="entry name" value="MetI-like_sf"/>
</dbReference>
<dbReference type="InterPro" id="IPR005889">
    <property type="entry name" value="NtrB"/>
</dbReference>
<dbReference type="NCBIfam" id="TIGR01183">
    <property type="entry name" value="ntrB"/>
    <property type="match status" value="1"/>
</dbReference>
<dbReference type="PANTHER" id="PTHR30151">
    <property type="entry name" value="ALKANE SULFONATE ABC TRANSPORTER-RELATED, MEMBRANE SUBUNIT"/>
    <property type="match status" value="1"/>
</dbReference>
<dbReference type="PANTHER" id="PTHR30151:SF7">
    <property type="entry name" value="NITRATE IMPORT PERMEASE PROTEIN NRTB"/>
    <property type="match status" value="1"/>
</dbReference>
<dbReference type="Pfam" id="PF00528">
    <property type="entry name" value="BPD_transp_1"/>
    <property type="match status" value="1"/>
</dbReference>
<dbReference type="SUPFAM" id="SSF161098">
    <property type="entry name" value="MetI-like"/>
    <property type="match status" value="1"/>
</dbReference>
<dbReference type="PROSITE" id="PS50928">
    <property type="entry name" value="ABC_TM1"/>
    <property type="match status" value="1"/>
</dbReference>
<evidence type="ECO:0000255" key="1"/>
<evidence type="ECO:0000255" key="2">
    <source>
        <dbReference type="PROSITE-ProRule" id="PRU00441"/>
    </source>
</evidence>
<evidence type="ECO:0000269" key="3">
    <source>
    </source>
</evidence>
<evidence type="ECO:0000303" key="4">
    <source>
    </source>
</evidence>
<evidence type="ECO:0000305" key="5"/>
<evidence type="ECO:0000305" key="6">
    <source>
    </source>
</evidence>
<proteinExistence type="evidence at protein level"/>
<gene>
    <name evidence="4" type="primary">nrtB</name>
    <name type="ordered locus">Synpcc7942_1238</name>
</gene>
<comment type="function">
    <text evidence="3 6">Part of the ABC transporter complex NrtABCD involved in nitrate uptake (PubMed:7767600, PubMed:8437564). The complex is probably also involved in nitrite transport (PubMed:7767600). Probably responsible for the translocation of the substrate across the membrane (PubMed:7767600).</text>
</comment>
<comment type="subunit">
    <text evidence="6">The complex is composed of two ATP-binding proteins (NrtC and NrtD), two transmembrane proteins (NrtB) and a solute-binding protein (NrtA).</text>
</comment>
<comment type="subcellular location">
    <subcellularLocation>
        <location evidence="6">Cell inner membrane</location>
        <topology evidence="1">Multi-pass membrane protein</topology>
    </subcellularLocation>
</comment>
<comment type="disruption phenotype">
    <text evidence="3">Mutant is unable to grow on nitrate, but grows normally with nitrite or ammonium as the nitrogen source.</text>
</comment>
<comment type="similarity">
    <text evidence="5">Belongs to the binding-protein-dependent transport system permease family. CysTW subfamily.</text>
</comment>
<reference key="1">
    <citation type="journal article" date="1993" name="Mol. Gen. Genet.">
        <title>Identification and characterization of a gene cluster involved in nitrate transport in the cyanobacterium Synechococcus sp. PCC7942.</title>
        <authorList>
            <person name="Omata T."/>
            <person name="Andriesse X."/>
            <person name="Hirano A."/>
        </authorList>
    </citation>
    <scope>NUCLEOTIDE SEQUENCE [GENOMIC DNA]</scope>
    <scope>FUNCTION</scope>
    <scope>DISRUPTION PHENOTYPE</scope>
</reference>
<reference key="2">
    <citation type="submission" date="2005-08" db="EMBL/GenBank/DDBJ databases">
        <title>Complete sequence of chromosome 1 of Synechococcus elongatus PCC 7942.</title>
        <authorList>
            <consortium name="US DOE Joint Genome Institute"/>
            <person name="Copeland A."/>
            <person name="Lucas S."/>
            <person name="Lapidus A."/>
            <person name="Barry K."/>
            <person name="Detter J.C."/>
            <person name="Glavina T."/>
            <person name="Hammon N."/>
            <person name="Israni S."/>
            <person name="Pitluck S."/>
            <person name="Schmutz J."/>
            <person name="Larimer F."/>
            <person name="Land M."/>
            <person name="Kyrpides N."/>
            <person name="Lykidis A."/>
            <person name="Golden S."/>
            <person name="Richardson P."/>
        </authorList>
    </citation>
    <scope>NUCLEOTIDE SEQUENCE [LARGE SCALE GENOMIC DNA]</scope>
    <source>
        <strain>ATCC 33912 / PCC 7942 / FACHB-805</strain>
    </source>
</reference>
<reference key="3">
    <citation type="journal article" date="1995" name="Plant Cell Physiol.">
        <title>Structure, function and regulation of the nitrate transport system of the cyanobacterium Synechococcus sp. PCC7942.</title>
        <authorList>
            <person name="Omata T."/>
        </authorList>
    </citation>
    <scope>FUNCTION</scope>
    <scope>SUBUNIT</scope>
    <scope>SUBCELLULAR LOCATION</scope>
    <source>
        <strain>ATCC 33912 / PCC 7942 / FACHB-805</strain>
    </source>
</reference>
<accession>P38044</accession>
<accession>Q31NV1</accession>
<organism>
    <name type="scientific">Synechococcus elongatus (strain ATCC 33912 / PCC 7942 / FACHB-805)</name>
    <name type="common">Anacystis nidulans R2</name>
    <dbReference type="NCBI Taxonomy" id="1140"/>
    <lineage>
        <taxon>Bacteria</taxon>
        <taxon>Bacillati</taxon>
        <taxon>Cyanobacteriota</taxon>
        <taxon>Cyanophyceae</taxon>
        <taxon>Synechococcales</taxon>
        <taxon>Synechococcaceae</taxon>
        <taxon>Synechococcus</taxon>
    </lineage>
</organism>
<protein>
    <recommendedName>
        <fullName evidence="5">Nitrate import permease protein NrtB</fullName>
    </recommendedName>
</protein>
<name>NRTB_SYNE7</name>